<protein>
    <recommendedName>
        <fullName evidence="1">Sugar fermentation stimulation protein homolog</fullName>
    </recommendedName>
</protein>
<gene>
    <name evidence="1" type="primary">sfsA</name>
    <name type="ordered locus">Sden_3169</name>
</gene>
<evidence type="ECO:0000255" key="1">
    <source>
        <dbReference type="HAMAP-Rule" id="MF_00095"/>
    </source>
</evidence>
<feature type="chain" id="PRO_1000008024" description="Sugar fermentation stimulation protein homolog">
    <location>
        <begin position="1"/>
        <end position="238"/>
    </location>
</feature>
<comment type="similarity">
    <text evidence="1">Belongs to the SfsA family.</text>
</comment>
<dbReference type="EMBL" id="CP000302">
    <property type="protein sequence ID" value="ABE56445.1"/>
    <property type="molecule type" value="Genomic_DNA"/>
</dbReference>
<dbReference type="RefSeq" id="WP_011497590.1">
    <property type="nucleotide sequence ID" value="NC_007954.1"/>
</dbReference>
<dbReference type="SMR" id="Q12JD1"/>
<dbReference type="STRING" id="318161.Sden_3169"/>
<dbReference type="KEGG" id="sdn:Sden_3169"/>
<dbReference type="eggNOG" id="COG1489">
    <property type="taxonomic scope" value="Bacteria"/>
</dbReference>
<dbReference type="HOGENOM" id="CLU_052299_2_0_6"/>
<dbReference type="OrthoDB" id="9802365at2"/>
<dbReference type="Proteomes" id="UP000001982">
    <property type="component" value="Chromosome"/>
</dbReference>
<dbReference type="GO" id="GO:0003677">
    <property type="term" value="F:DNA binding"/>
    <property type="evidence" value="ECO:0007669"/>
    <property type="project" value="InterPro"/>
</dbReference>
<dbReference type="CDD" id="cd22359">
    <property type="entry name" value="SfsA-like_bacterial"/>
    <property type="match status" value="1"/>
</dbReference>
<dbReference type="FunFam" id="2.40.50.580:FF:000001">
    <property type="entry name" value="Sugar fermentation stimulation protein A"/>
    <property type="match status" value="1"/>
</dbReference>
<dbReference type="FunFam" id="3.40.1350.60:FF:000001">
    <property type="entry name" value="Sugar fermentation stimulation protein A"/>
    <property type="match status" value="1"/>
</dbReference>
<dbReference type="Gene3D" id="2.40.50.580">
    <property type="match status" value="1"/>
</dbReference>
<dbReference type="Gene3D" id="3.40.1350.60">
    <property type="match status" value="1"/>
</dbReference>
<dbReference type="HAMAP" id="MF_00095">
    <property type="entry name" value="SfsA"/>
    <property type="match status" value="1"/>
</dbReference>
<dbReference type="InterPro" id="IPR005224">
    <property type="entry name" value="SfsA"/>
</dbReference>
<dbReference type="InterPro" id="IPR040452">
    <property type="entry name" value="SfsA_C"/>
</dbReference>
<dbReference type="InterPro" id="IPR041465">
    <property type="entry name" value="SfsA_N"/>
</dbReference>
<dbReference type="NCBIfam" id="TIGR00230">
    <property type="entry name" value="sfsA"/>
    <property type="match status" value="1"/>
</dbReference>
<dbReference type="PANTHER" id="PTHR30545">
    <property type="entry name" value="SUGAR FERMENTATION STIMULATION PROTEIN A"/>
    <property type="match status" value="1"/>
</dbReference>
<dbReference type="PANTHER" id="PTHR30545:SF2">
    <property type="entry name" value="SUGAR FERMENTATION STIMULATION PROTEIN A"/>
    <property type="match status" value="1"/>
</dbReference>
<dbReference type="Pfam" id="PF03749">
    <property type="entry name" value="SfsA"/>
    <property type="match status" value="1"/>
</dbReference>
<dbReference type="Pfam" id="PF17746">
    <property type="entry name" value="SfsA_N"/>
    <property type="match status" value="1"/>
</dbReference>
<proteinExistence type="inferred from homology"/>
<name>SFSA_SHEDO</name>
<reference key="1">
    <citation type="submission" date="2006-03" db="EMBL/GenBank/DDBJ databases">
        <title>Complete sequence of Shewanella denitrificans OS217.</title>
        <authorList>
            <consortium name="US DOE Joint Genome Institute"/>
            <person name="Copeland A."/>
            <person name="Lucas S."/>
            <person name="Lapidus A."/>
            <person name="Barry K."/>
            <person name="Detter J.C."/>
            <person name="Glavina del Rio T."/>
            <person name="Hammon N."/>
            <person name="Israni S."/>
            <person name="Dalin E."/>
            <person name="Tice H."/>
            <person name="Pitluck S."/>
            <person name="Brettin T."/>
            <person name="Bruce D."/>
            <person name="Han C."/>
            <person name="Tapia R."/>
            <person name="Gilna P."/>
            <person name="Kiss H."/>
            <person name="Schmutz J."/>
            <person name="Larimer F."/>
            <person name="Land M."/>
            <person name="Hauser L."/>
            <person name="Kyrpides N."/>
            <person name="Lykidis A."/>
            <person name="Richardson P."/>
        </authorList>
    </citation>
    <scope>NUCLEOTIDE SEQUENCE [LARGE SCALE GENOMIC DNA]</scope>
    <source>
        <strain>OS217 / ATCC BAA-1090 / DSM 15013</strain>
    </source>
</reference>
<keyword id="KW-1185">Reference proteome</keyword>
<sequence length="238" mass="26560">MQYSPNLAHGTLLRRYKRFLADVLLDDGTEITLHCPNTGSMKNCLFPGETVWFSTSNNPKRKYAHTWEQSSTPDKQLIGINTGRANALAEEAINLGVIKELTGYDRLQREVKYGEENSRIDILLSSDTRASCYIEVKSCTLLEEGSTSGRGYFPDSVTVRGQKHLRELIHMVKQGHRAVLLFVVQHSGINSVSPARHIDVAYSELFTQALDAGVEVLAYQTQMSPQESQILTSCPVIT</sequence>
<accession>Q12JD1</accession>
<organism>
    <name type="scientific">Shewanella denitrificans (strain OS217 / ATCC BAA-1090 / DSM 15013)</name>
    <dbReference type="NCBI Taxonomy" id="318161"/>
    <lineage>
        <taxon>Bacteria</taxon>
        <taxon>Pseudomonadati</taxon>
        <taxon>Pseudomonadota</taxon>
        <taxon>Gammaproteobacteria</taxon>
        <taxon>Alteromonadales</taxon>
        <taxon>Shewanellaceae</taxon>
        <taxon>Shewanella</taxon>
    </lineage>
</organism>